<evidence type="ECO:0000250" key="1"/>
<evidence type="ECO:0000250" key="2">
    <source>
        <dbReference type="UniProtKB" id="P27262"/>
    </source>
</evidence>
<evidence type="ECO:0000250" key="3">
    <source>
        <dbReference type="UniProtKB" id="Q91J26"/>
    </source>
</evidence>
<evidence type="ECO:0000256" key="4">
    <source>
        <dbReference type="SAM" id="MobiDB-lite"/>
    </source>
</evidence>
<evidence type="ECO:0000269" key="5">
    <source>
    </source>
</evidence>
<evidence type="ECO:0000269" key="6">
    <source>
    </source>
</evidence>
<evidence type="ECO:0000269" key="7">
    <source>
    </source>
</evidence>
<evidence type="ECO:0000305" key="8"/>
<comment type="function">
    <text evidence="3 5">Multifunctional protein that modulates host antiviral defenses and promotes host attractiveness to insect vectors (By similarity). Acts as a suppressor of RNA-mediated gene silencing, also known as post-transcriptional gene silencing (PTGS), a mechanism of plant viral defense that limits the accumulation of viral RNAs (PubMed:11952122). TrAP suppresses the host RNA silencing by inhibiting adenosine kinase 2 (ADK2), a kinase involved in a general methylation pathway (By similarity). Also suppresses the host basal defense by interacting with and inhibiting SNF1 kinase, a key regulator of cell metabolism implicated in innate antiviral defense (By similarity).</text>
</comment>
<comment type="function">
    <text evidence="2">Inhibits signal transduction by the phytohormone jasmonate, making the infected plant more attractive to aphids, which are the second host to play a role as a dissemination vector. Acts by binding to ubiquitin precursor RPS27A, thereby preventing ubiquitin degradation of JAZ.</text>
</comment>
<comment type="subunit">
    <text evidence="3">Monomer. Homodimer. Homooligomer. Self-interaction correlates with nuclear localization and efficient activation of transcription. Monomers suppress local silencing by interacting with and inactivating host adenosine kinase 2 (ADK2) in the cytoplasm. Interacts with and inhibits host SNF1 kinase. Binds to ssDNA. May interact with host RPS27A.</text>
</comment>
<comment type="subcellular location">
    <subcellularLocation>
        <location evidence="3">Host nucleus</location>
    </subcellularLocation>
    <subcellularLocation>
        <location evidence="3">Host cytoplasm</location>
    </subcellularLocation>
    <text evidence="3">The phosphorylated form appears to accumulate almost exclusively in the nucleus, whereas the non-phosphorylated form is found in both nucleus and cytoplasm.</text>
</comment>
<comment type="domain">
    <text evidence="6">The zinc finger and the transactivation region are involved in PTGS suppression.</text>
</comment>
<comment type="PTM">
    <text evidence="3">Phosphorylated.</text>
</comment>
<comment type="similarity">
    <text evidence="8">Belongs to the geminiviridae transcriptional activator protein family.</text>
</comment>
<keyword id="KW-0010">Activator</keyword>
<keyword id="KW-0238">DNA-binding</keyword>
<keyword id="KW-1035">Host cytoplasm</keyword>
<keyword id="KW-1048">Host nucleus</keyword>
<keyword id="KW-0945">Host-virus interaction</keyword>
<keyword id="KW-1090">Inhibition of host innate immune response by virus</keyword>
<keyword id="KW-0479">Metal-binding</keyword>
<keyword id="KW-0597">Phosphoprotein</keyword>
<keyword id="KW-1185">Reference proteome</keyword>
<keyword id="KW-0941">Suppressor of RNA silencing</keyword>
<keyword id="KW-0899">Viral immunoevasion</keyword>
<keyword id="KW-0862">Zinc</keyword>
<keyword id="KW-0863">Zinc-finger</keyword>
<sequence>MRSSSPSTGHSTQVPIKVQHRIAKKTTRRRRVDLPCGCSYFVALGCHNHGFTHRGTTHCSSIREWRVYLDGQKSPVFQDNQTPRETISEEPRHNHNTSPIQLQPEESVGDTQMFSNLPNLDSFTSSDLAFLKSI</sequence>
<feature type="chain" id="PRO_0000312153" description="Transcriptional activator protein">
    <location>
        <begin position="1"/>
        <end position="134"/>
    </location>
</feature>
<feature type="zinc finger region">
    <location>
        <begin position="36"/>
        <end position="53"/>
    </location>
</feature>
<feature type="region of interest" description="Disordered" evidence="4">
    <location>
        <begin position="73"/>
        <end position="103"/>
    </location>
</feature>
<feature type="region of interest" description="Transactivation" evidence="1">
    <location>
        <begin position="119"/>
        <end position="134"/>
    </location>
</feature>
<feature type="short sequence motif" description="Nuclear localization signal" evidence="7">
    <location>
        <begin position="17"/>
        <end position="31"/>
    </location>
</feature>
<feature type="compositionally biased region" description="Polar residues" evidence="4">
    <location>
        <begin position="75"/>
        <end position="85"/>
    </location>
</feature>
<feature type="mutagenesis site" description="Loss of suppression of PTGS. Produces chlorosis and mosaic symptoms." evidence="5">
    <original>C</original>
    <variation>R</variation>
    <location>
        <position position="36"/>
    </location>
</feature>
<feature type="mutagenesis site" description="Loss of suppression of PTGS. Produces chlorosis and mosaic symptoms." evidence="5">
    <original>C</original>
    <variation>N</variation>
    <location>
        <position position="38"/>
    </location>
</feature>
<feature type="mutagenesis site" description="Loss of suppression of PTGS. Produces chlorosis and mosaic symptoms." evidence="5">
    <original>C</original>
    <variation>I</variation>
    <location>
        <position position="46"/>
    </location>
</feature>
<feature type="mutagenesis site" description="Produces local necrotic ringspots and systemic necrosis in N.benthamiana plants." evidence="5">
    <original>T</original>
    <variation>M</variation>
    <location>
        <position position="52"/>
    </location>
</feature>
<feature type="mutagenesis site" description="Produced irregular necrotic lesions on inoculated leaves." evidence="5">
    <original>H</original>
    <variation>P</variation>
    <location>
        <position position="53"/>
    </location>
</feature>
<feature type="mutagenesis site" description="Produces local necrotic ringspots and systemic necrosis in N.benthamiana plants." evidence="5">
    <original>H</original>
    <variation>S</variation>
    <location>
        <position position="58"/>
    </location>
</feature>
<feature type="mutagenesis site" description="Produces local necrotic ringspots and systemic necrosis in N.benthamiana plants." evidence="5">
    <original>C</original>
    <variation>S</variation>
    <location>
        <position position="59"/>
    </location>
</feature>
<feature type="mutagenesis site" description="Produces local necrotic ringspots and systemic necrosis in N.benthamiana plants." evidence="5">
    <original>S</original>
    <variation>R</variation>
    <location>
        <position position="61"/>
    </location>
</feature>
<feature type="mutagenesis site" description="Produced irregular necrotic lesions on inoculated leaves." evidence="5">
    <original>Y</original>
    <variation>D</variation>
    <location>
        <position position="68"/>
    </location>
</feature>
<feature type="mutagenesis site" description="Produces local necrotic ringspots and systemic necrosis in N.benthamiana plants." evidence="5">
    <original>S</original>
    <variation>D</variation>
    <location>
        <position position="74"/>
    </location>
</feature>
<protein>
    <recommendedName>
        <fullName>Transcriptional activator protein</fullName>
        <shortName>TrAP</shortName>
    </recommendedName>
    <alternativeName>
        <fullName>Protein C2</fullName>
    </alternativeName>
    <alternativeName>
        <fullName>Protein L2</fullName>
    </alternativeName>
</protein>
<dbReference type="EMBL" id="AF311734">
    <property type="protein sequence ID" value="AAG27474.1"/>
    <property type="molecule type" value="Genomic_DNA"/>
</dbReference>
<dbReference type="KEGG" id="vg:949227"/>
<dbReference type="OrthoDB" id="11041at10239"/>
<dbReference type="Proteomes" id="UP000008267">
    <property type="component" value="Genome"/>
</dbReference>
<dbReference type="GO" id="GO:0030430">
    <property type="term" value="C:host cell cytoplasm"/>
    <property type="evidence" value="ECO:0007669"/>
    <property type="project" value="UniProtKB-SubCell"/>
</dbReference>
<dbReference type="GO" id="GO:0042025">
    <property type="term" value="C:host cell nucleus"/>
    <property type="evidence" value="ECO:0007669"/>
    <property type="project" value="UniProtKB-SubCell"/>
</dbReference>
<dbReference type="GO" id="GO:0019028">
    <property type="term" value="C:viral capsid"/>
    <property type="evidence" value="ECO:0007669"/>
    <property type="project" value="InterPro"/>
</dbReference>
<dbReference type="GO" id="GO:0003677">
    <property type="term" value="F:DNA binding"/>
    <property type="evidence" value="ECO:0007669"/>
    <property type="project" value="UniProtKB-KW"/>
</dbReference>
<dbReference type="GO" id="GO:0005198">
    <property type="term" value="F:structural molecule activity"/>
    <property type="evidence" value="ECO:0007669"/>
    <property type="project" value="InterPro"/>
</dbReference>
<dbReference type="GO" id="GO:0008270">
    <property type="term" value="F:zinc ion binding"/>
    <property type="evidence" value="ECO:0007669"/>
    <property type="project" value="UniProtKB-KW"/>
</dbReference>
<dbReference type="GO" id="GO:0052170">
    <property type="term" value="P:symbiont-mediated suppression of host innate immune response"/>
    <property type="evidence" value="ECO:0007669"/>
    <property type="project" value="UniProtKB-KW"/>
</dbReference>
<dbReference type="InterPro" id="IPR000942">
    <property type="entry name" value="Gemini_AL2"/>
</dbReference>
<dbReference type="Pfam" id="PF01440">
    <property type="entry name" value="Gemini_AL2"/>
    <property type="match status" value="1"/>
</dbReference>
<dbReference type="PRINTS" id="PR00230">
    <property type="entry name" value="GEMCOATAL2"/>
</dbReference>
<accession>Q9DXE6</accession>
<reference key="1">
    <citation type="journal article" date="2001" name="Virus Res.">
        <title>Tomato yellow leaf curl China virus: monopartite genome organization and agroinfection of plants.</title>
        <authorList>
            <person name="Yin Q."/>
            <person name="Yang H."/>
            <person name="Gong Q."/>
            <person name="Wang H."/>
            <person name="Liu Y."/>
            <person name="Hong Y."/>
            <person name="Tien P."/>
        </authorList>
    </citation>
    <scope>NUCLEOTIDE SEQUENCE [GENOMIC DNA]</scope>
    <source>
        <strain>Isolate CHI</strain>
    </source>
</reference>
<reference key="2">
    <citation type="journal article" date="2001" name="Mol. Plant Microbe Interact.">
        <title>Gene C2 of the monopartite geminivirus tomato yellow leaf curl virus-China encodes a pathogenicity determinant that is localized in the nucleus.</title>
        <authorList>
            <person name="van Wezel R."/>
            <person name="Liu H."/>
            <person name="Tien P."/>
            <person name="Stanley J."/>
            <person name="Hong Y."/>
        </authorList>
    </citation>
    <scope>SUBCELLULAR LOCATION</scope>
</reference>
<reference key="3">
    <citation type="journal article" date="2002" name="Mol. Plant Microbe Interact.">
        <title>Mutation of three cysteine residues in Tomato yellow leaf curl virus-China C2 protein causes dysfunction in pathogenesis and posttranscriptional gene-silencing suppression.</title>
        <authorList>
            <person name="van Wezel R."/>
            <person name="Dong X."/>
            <person name="Liu H."/>
            <person name="Tien P."/>
            <person name="Stanley J."/>
            <person name="Hong Y."/>
        </authorList>
    </citation>
    <scope>FUNCTION</scope>
    <scope>MUTAGENESIS OF CYS-36; CYS-38; CYS-46; THR-52; HIS-53; HIS-58; CYS-59; SER-61; TYR-68 AND SER-74</scope>
</reference>
<reference key="4">
    <citation type="journal article" date="2003" name="J. Virol.">
        <title>Functional characterization of the nuclear localization signal for a suppressor of posttranscriptional gene silencing.</title>
        <authorList>
            <person name="Dong X."/>
            <person name="van Wezel R."/>
            <person name="Stanley J."/>
            <person name="Hong Y."/>
        </authorList>
    </citation>
    <scope>NUCLEAR LOCALIZATION SIGNAL</scope>
</reference>
<reference key="5">
    <citation type="journal article" date="2003" name="J. Virol.">
        <title>Contribution of the zinc finger to zinc and DNA binding by a suppressor of posttranscriptional gene silencing.</title>
        <authorList>
            <person name="Van Wezel R."/>
            <person name="Liu H."/>
            <person name="Wu Z."/>
            <person name="Stanley J."/>
            <person name="Hong Y."/>
        </authorList>
    </citation>
    <scope>ZINC-BINDING</scope>
</reference>
<organism>
    <name type="scientific">Tomato yellow leaf curl China virus</name>
    <name type="common">TYLCCNV</name>
    <dbReference type="NCBI Taxonomy" id="185793"/>
    <lineage>
        <taxon>Viruses</taxon>
        <taxon>Monodnaviria</taxon>
        <taxon>Shotokuvirae</taxon>
        <taxon>Cressdnaviricota</taxon>
        <taxon>Repensiviricetes</taxon>
        <taxon>Geplafuvirales</taxon>
        <taxon>Geminiviridae</taxon>
        <taxon>Begomovirus</taxon>
    </lineage>
</organism>
<gene>
    <name type="ORF">C2</name>
    <name type="ORF">L2</name>
</gene>
<proteinExistence type="evidence at protein level"/>
<organismHost>
    <name type="scientific">Nicotiana tabacum</name>
    <name type="common">Common tobacco</name>
    <dbReference type="NCBI Taxonomy" id="4097"/>
</organismHost>
<organismHost>
    <name type="scientific">Sigesbeckia orientalis</name>
    <dbReference type="NCBI Taxonomy" id="185191"/>
</organismHost>
<organismHost>
    <name type="scientific">Solanum lycopersicum</name>
    <name type="common">Tomato</name>
    <name type="synonym">Lycopersicon esculentum</name>
    <dbReference type="NCBI Taxonomy" id="4081"/>
</organismHost>
<name>TRAP_TYLCC</name>